<feature type="chain" id="PRO_0000392557" description="Probable galacturonosyltransferase 4">
    <location>
        <begin position="1"/>
        <end position="616"/>
    </location>
</feature>
<feature type="topological domain" description="Cytoplasmic" evidence="2">
    <location>
        <begin position="1"/>
        <end position="6"/>
    </location>
</feature>
<feature type="transmembrane region" description="Helical; Signal-anchor for type II membrane protein" evidence="2">
    <location>
        <begin position="7"/>
        <end position="29"/>
    </location>
</feature>
<feature type="topological domain" description="Lumenal" evidence="2">
    <location>
        <begin position="30"/>
        <end position="616"/>
    </location>
</feature>
<feature type="region of interest" description="Disordered" evidence="3">
    <location>
        <begin position="132"/>
        <end position="152"/>
    </location>
</feature>
<feature type="glycosylation site" description="N-linked (GlcNAc...) asparagine" evidence="2">
    <location>
        <position position="291"/>
    </location>
</feature>
<feature type="glycosylation site" description="N-linked (GlcNAc...) asparagine" evidence="2">
    <location>
        <position position="326"/>
    </location>
</feature>
<feature type="glycosylation site" description="N-linked (GlcNAc...) asparagine" evidence="2">
    <location>
        <position position="378"/>
    </location>
</feature>
<feature type="glycosylation site" description="N-linked (GlcNAc...) asparagine" evidence="2">
    <location>
        <position position="481"/>
    </location>
</feature>
<feature type="glycosylation site" description="N-linked (GlcNAc...) asparagine" evidence="2">
    <location>
        <position position="514"/>
    </location>
</feature>
<sequence>MMVKLRNLVLFFMLLTVVAHILLYTDPAASFKTPFSKRDFLEDVTALTFNSDENRLNLLPRESPAVLRGGLVGAVYSDKNSRRLDQLSARVLSATDDDTHSHTDISIKQVTHDAASDSHINRENMHVQLTQQTSEKVDEQPEPNAFGAKKDTGNVLMPDAQVRHLKDQLIRAKVYLSLPSAKANAHFVRELRLRIKEVQRALADASKDSDLPKTAIEKLKAMEQTLAKGKQIQDDCSTVVKKLRAMLHSADEQLRVHKKQTMFLTQLTAKTIPKGLHCLPLRLTTDYYALNSSEQQFPNQEKLEDTQLYHYALFSDNVLATSVVVNSTITNAKHPLKHVFHIVTDRLNYAAMRMWFLDNPPGKATIQVQNVEEFTWLNSSYSPVLKQLSSRSMIDYYFRAHHTNSDTNLKFRNPKYLSILNHLRFYLPEIFPKLSKVLFLDDDIVVQKDLSGLWSVDLKGNVNGAVETCGESFHRFDRYLNFSNPLISKNFDPRACGWAYGMNVFDLDEWKRQNITEVYHRWQDLNQDRELWKLGTLPPGLITFWRRTYPLDRKWHILGLGYNPSVNQRDIERAAVIHYNGNLKPWLEIGIPRYRGFWSKHVDYEHVYLRECNINP</sequence>
<name>GAUT4_ARATH</name>
<reference key="1">
    <citation type="journal article" date="1998" name="DNA Res.">
        <title>Structural analysis of Arabidopsis thaliana chromosome 5. VIII. Sequence features of the regions of 1,081,958 bp covered by seventeen physically assigned P1 and TAC clones.</title>
        <authorList>
            <person name="Asamizu E."/>
            <person name="Sato S."/>
            <person name="Kaneko T."/>
            <person name="Nakamura Y."/>
            <person name="Kotani H."/>
            <person name="Miyajima N."/>
            <person name="Tabata S."/>
        </authorList>
    </citation>
    <scope>NUCLEOTIDE SEQUENCE [LARGE SCALE GENOMIC DNA]</scope>
    <source>
        <strain>cv. Columbia</strain>
    </source>
</reference>
<reference key="2">
    <citation type="journal article" date="2017" name="Plant J.">
        <title>Araport11: a complete reannotation of the Arabidopsis thaliana reference genome.</title>
        <authorList>
            <person name="Cheng C.Y."/>
            <person name="Krishnakumar V."/>
            <person name="Chan A.P."/>
            <person name="Thibaud-Nissen F."/>
            <person name="Schobel S."/>
            <person name="Town C.D."/>
        </authorList>
    </citation>
    <scope>GENOME REANNOTATION</scope>
    <source>
        <strain>cv. Columbia</strain>
    </source>
</reference>
<reference key="3">
    <citation type="journal article" date="2003" name="Science">
        <title>Empirical analysis of transcriptional activity in the Arabidopsis genome.</title>
        <authorList>
            <person name="Yamada K."/>
            <person name="Lim J."/>
            <person name="Dale J.M."/>
            <person name="Chen H."/>
            <person name="Shinn P."/>
            <person name="Palm C.J."/>
            <person name="Southwick A.M."/>
            <person name="Wu H.C."/>
            <person name="Kim C.J."/>
            <person name="Nguyen M."/>
            <person name="Pham P.K."/>
            <person name="Cheuk R.F."/>
            <person name="Karlin-Newmann G."/>
            <person name="Liu S.X."/>
            <person name="Lam B."/>
            <person name="Sakano H."/>
            <person name="Wu T."/>
            <person name="Yu G."/>
            <person name="Miranda M."/>
            <person name="Quach H.L."/>
            <person name="Tripp M."/>
            <person name="Chang C.H."/>
            <person name="Lee J.M."/>
            <person name="Toriumi M.J."/>
            <person name="Chan M.M."/>
            <person name="Tang C.C."/>
            <person name="Onodera C.S."/>
            <person name="Deng J.M."/>
            <person name="Akiyama K."/>
            <person name="Ansari Y."/>
            <person name="Arakawa T."/>
            <person name="Banh J."/>
            <person name="Banno F."/>
            <person name="Bowser L."/>
            <person name="Brooks S.Y."/>
            <person name="Carninci P."/>
            <person name="Chao Q."/>
            <person name="Choy N."/>
            <person name="Enju A."/>
            <person name="Goldsmith A.D."/>
            <person name="Gurjal M."/>
            <person name="Hansen N.F."/>
            <person name="Hayashizaki Y."/>
            <person name="Johnson-Hopson C."/>
            <person name="Hsuan V.W."/>
            <person name="Iida K."/>
            <person name="Karnes M."/>
            <person name="Khan S."/>
            <person name="Koesema E."/>
            <person name="Ishida J."/>
            <person name="Jiang P.X."/>
            <person name="Jones T."/>
            <person name="Kawai J."/>
            <person name="Kamiya A."/>
            <person name="Meyers C."/>
            <person name="Nakajima M."/>
            <person name="Narusaka M."/>
            <person name="Seki M."/>
            <person name="Sakurai T."/>
            <person name="Satou M."/>
            <person name="Tamse R."/>
            <person name="Vaysberg M."/>
            <person name="Wallender E.K."/>
            <person name="Wong C."/>
            <person name="Yamamura Y."/>
            <person name="Yuan S."/>
            <person name="Shinozaki K."/>
            <person name="Davis R.W."/>
            <person name="Theologis A."/>
            <person name="Ecker J.R."/>
        </authorList>
    </citation>
    <scope>NUCLEOTIDE SEQUENCE [LARGE SCALE MRNA]</scope>
    <source>
        <strain>cv. Columbia</strain>
    </source>
</reference>
<reference key="4">
    <citation type="journal article" date="2000" name="Plant Mol. Biol.">
        <title>Organization and structural evolution of four multigene families in Arabidopsis thaliana: AtLCAD, AtLGT, AtMYST and AtHD-GL2.</title>
        <authorList>
            <person name="Tavares R."/>
            <person name="Aubourg S."/>
            <person name="Lecharny A."/>
            <person name="Kreis M."/>
        </authorList>
    </citation>
    <scope>GENE FAMILY</scope>
    <scope>NOMENCLATURE</scope>
</reference>
<reference key="5">
    <citation type="journal article" date="2006" name="Proc. Natl. Acad. Sci. U.S.A.">
        <title>Functional identification of an Arabidopsis pectin biosynthetic homogalacturonan galacturonosyltransferase.</title>
        <authorList>
            <person name="Sterling J.D."/>
            <person name="Atmodjo M.A."/>
            <person name="Inwood S.E."/>
            <person name="Kumar Kolli V.S."/>
            <person name="Quigley H.F."/>
            <person name="Hahn M.G."/>
            <person name="Mohnen D."/>
        </authorList>
    </citation>
    <scope>GENE FAMILY</scope>
    <scope>NOMENCLATURE</scope>
</reference>
<reference key="6">
    <citation type="journal article" date="2009" name="Mol. Plant">
        <title>Arabidopsis thaliana T-DNA mutants implicate GAUT genes in the biosynthesis of pectin and xylan in cell walls and seed testa.</title>
        <authorList>
            <person name="Caffall K.H."/>
            <person name="Pattathil S."/>
            <person name="Phillips S.E."/>
            <person name="Hahn M.G."/>
            <person name="Mohnen D."/>
        </authorList>
    </citation>
    <scope>TISSUE SPECIFICITY</scope>
</reference>
<proteinExistence type="evidence at transcript level"/>
<evidence type="ECO:0000250" key="1"/>
<evidence type="ECO:0000255" key="2"/>
<evidence type="ECO:0000256" key="3">
    <source>
        <dbReference type="SAM" id="MobiDB-lite"/>
    </source>
</evidence>
<evidence type="ECO:0000269" key="4">
    <source>
    </source>
</evidence>
<evidence type="ECO:0000305" key="5"/>
<gene>
    <name type="primary">GAUT4</name>
    <name type="synonym">JS36L</name>
    <name type="synonym">LGT3</name>
    <name type="ordered locus">At5g47780</name>
    <name type="ORF">MCA23.10</name>
</gene>
<keyword id="KW-0961">Cell wall biogenesis/degradation</keyword>
<keyword id="KW-0325">Glycoprotein</keyword>
<keyword id="KW-0328">Glycosyltransferase</keyword>
<keyword id="KW-0333">Golgi apparatus</keyword>
<keyword id="KW-0472">Membrane</keyword>
<keyword id="KW-1185">Reference proteome</keyword>
<keyword id="KW-0735">Signal-anchor</keyword>
<keyword id="KW-0808">Transferase</keyword>
<keyword id="KW-0812">Transmembrane</keyword>
<keyword id="KW-1133">Transmembrane helix</keyword>
<comment type="function">
    <text evidence="1">May be involved in pectin and/or xylans biosynthesis in cell walls.</text>
</comment>
<comment type="pathway">
    <text>Glycan metabolism; pectin biosynthesis.</text>
</comment>
<comment type="subcellular location">
    <subcellularLocation>
        <location evidence="1">Golgi apparatus membrane</location>
        <topology evidence="1">Single-pass type II membrane protein</topology>
    </subcellularLocation>
</comment>
<comment type="tissue specificity">
    <text evidence="4">Expressed in roots, inflorescences, siliques, leaves and stems.</text>
</comment>
<comment type="similarity">
    <text evidence="5">Belongs to the glycosyltransferase 8 family.</text>
</comment>
<comment type="sequence caution" evidence="5">
    <conflict type="erroneous initiation">
        <sequence resource="EMBL-CDS" id="BAB11325"/>
    </conflict>
</comment>
<dbReference type="EC" id="2.4.1.-"/>
<dbReference type="EMBL" id="AB016886">
    <property type="protein sequence ID" value="BAB11325.1"/>
    <property type="status" value="ALT_INIT"/>
    <property type="molecule type" value="Genomic_DNA"/>
</dbReference>
<dbReference type="EMBL" id="CP002688">
    <property type="protein sequence ID" value="AED95571.1"/>
    <property type="molecule type" value="Genomic_DNA"/>
</dbReference>
<dbReference type="EMBL" id="AY056202">
    <property type="protein sequence ID" value="AAL07051.1"/>
    <property type="molecule type" value="mRNA"/>
</dbReference>
<dbReference type="EMBL" id="AY091394">
    <property type="protein sequence ID" value="AAM14333.1"/>
    <property type="molecule type" value="mRNA"/>
</dbReference>
<dbReference type="RefSeq" id="NP_568688.1">
    <property type="nucleotide sequence ID" value="NM_124152.3"/>
</dbReference>
<dbReference type="SMR" id="Q93ZX7"/>
<dbReference type="BioGRID" id="20077">
    <property type="interactions" value="1"/>
</dbReference>
<dbReference type="FunCoup" id="Q93ZX7">
    <property type="interactions" value="1013"/>
</dbReference>
<dbReference type="STRING" id="3702.Q93ZX7"/>
<dbReference type="CAZy" id="GT8">
    <property type="family name" value="Glycosyltransferase Family 8"/>
</dbReference>
<dbReference type="GlyCosmos" id="Q93ZX7">
    <property type="glycosylation" value="5 sites, No reported glycans"/>
</dbReference>
<dbReference type="GlyGen" id="Q93ZX7">
    <property type="glycosylation" value="5 sites"/>
</dbReference>
<dbReference type="PaxDb" id="3702-AT5G47780.1"/>
<dbReference type="ProteomicsDB" id="221903"/>
<dbReference type="EnsemblPlants" id="AT5G47780.1">
    <property type="protein sequence ID" value="AT5G47780.1"/>
    <property type="gene ID" value="AT5G47780"/>
</dbReference>
<dbReference type="GeneID" id="834829"/>
<dbReference type="Gramene" id="AT5G47780.1">
    <property type="protein sequence ID" value="AT5G47780.1"/>
    <property type="gene ID" value="AT5G47780"/>
</dbReference>
<dbReference type="KEGG" id="ath:AT5G47780"/>
<dbReference type="Araport" id="AT5G47780"/>
<dbReference type="TAIR" id="AT5G47780">
    <property type="gene designation" value="GAUT4"/>
</dbReference>
<dbReference type="eggNOG" id="ENOG502QQZJ">
    <property type="taxonomic scope" value="Eukaryota"/>
</dbReference>
<dbReference type="HOGENOM" id="CLU_010770_2_1_1"/>
<dbReference type="InParanoid" id="Q93ZX7"/>
<dbReference type="OMA" id="HERQLWK"/>
<dbReference type="PhylomeDB" id="Q93ZX7"/>
<dbReference type="UniPathway" id="UPA00845"/>
<dbReference type="PRO" id="PR:Q93ZX7"/>
<dbReference type="Proteomes" id="UP000006548">
    <property type="component" value="Chromosome 5"/>
</dbReference>
<dbReference type="ExpressionAtlas" id="Q93ZX7">
    <property type="expression patterns" value="baseline and differential"/>
</dbReference>
<dbReference type="GO" id="GO:0005794">
    <property type="term" value="C:Golgi apparatus"/>
    <property type="evidence" value="ECO:0000314"/>
    <property type="project" value="TAIR"/>
</dbReference>
<dbReference type="GO" id="GO:0000137">
    <property type="term" value="C:Golgi cis cisterna"/>
    <property type="evidence" value="ECO:0007005"/>
    <property type="project" value="TAIR"/>
</dbReference>
<dbReference type="GO" id="GO:0000139">
    <property type="term" value="C:Golgi membrane"/>
    <property type="evidence" value="ECO:0007669"/>
    <property type="project" value="UniProtKB-SubCell"/>
</dbReference>
<dbReference type="GO" id="GO:0047262">
    <property type="term" value="F:polygalacturonate 4-alpha-galacturonosyltransferase activity"/>
    <property type="evidence" value="ECO:0000250"/>
    <property type="project" value="TAIR"/>
</dbReference>
<dbReference type="GO" id="GO:0071555">
    <property type="term" value="P:cell wall organization"/>
    <property type="evidence" value="ECO:0007669"/>
    <property type="project" value="UniProtKB-KW"/>
</dbReference>
<dbReference type="GO" id="GO:0045489">
    <property type="term" value="P:pectin biosynthetic process"/>
    <property type="evidence" value="ECO:0007669"/>
    <property type="project" value="UniProtKB-UniPathway"/>
</dbReference>
<dbReference type="CDD" id="cd06429">
    <property type="entry name" value="GT8_like_1"/>
    <property type="match status" value="1"/>
</dbReference>
<dbReference type="Gene3D" id="3.90.550.10">
    <property type="entry name" value="Spore Coat Polysaccharide Biosynthesis Protein SpsA, Chain A"/>
    <property type="match status" value="1"/>
</dbReference>
<dbReference type="InterPro" id="IPR029993">
    <property type="entry name" value="GAUT"/>
</dbReference>
<dbReference type="InterPro" id="IPR002495">
    <property type="entry name" value="Glyco_trans_8"/>
</dbReference>
<dbReference type="InterPro" id="IPR029044">
    <property type="entry name" value="Nucleotide-diphossugar_trans"/>
</dbReference>
<dbReference type="PANTHER" id="PTHR32116">
    <property type="entry name" value="GALACTURONOSYLTRANSFERASE 4-RELATED"/>
    <property type="match status" value="1"/>
</dbReference>
<dbReference type="PANTHER" id="PTHR32116:SF7">
    <property type="entry name" value="GALACTURONOSYLTRANSFERASE 4-RELATED"/>
    <property type="match status" value="1"/>
</dbReference>
<dbReference type="Pfam" id="PF01501">
    <property type="entry name" value="Glyco_transf_8"/>
    <property type="match status" value="1"/>
</dbReference>
<dbReference type="SUPFAM" id="SSF53448">
    <property type="entry name" value="Nucleotide-diphospho-sugar transferases"/>
    <property type="match status" value="1"/>
</dbReference>
<protein>
    <recommendedName>
        <fullName>Probable galacturonosyltransferase 4</fullName>
        <ecNumber>2.4.1.-</ecNumber>
    </recommendedName>
    <alternativeName>
        <fullName>Like glycosyl transferase 3</fullName>
    </alternativeName>
</protein>
<accession>Q93ZX7</accession>
<accession>Q9FIK3</accession>
<organism>
    <name type="scientific">Arabidopsis thaliana</name>
    <name type="common">Mouse-ear cress</name>
    <dbReference type="NCBI Taxonomy" id="3702"/>
    <lineage>
        <taxon>Eukaryota</taxon>
        <taxon>Viridiplantae</taxon>
        <taxon>Streptophyta</taxon>
        <taxon>Embryophyta</taxon>
        <taxon>Tracheophyta</taxon>
        <taxon>Spermatophyta</taxon>
        <taxon>Magnoliopsida</taxon>
        <taxon>eudicotyledons</taxon>
        <taxon>Gunneridae</taxon>
        <taxon>Pentapetalae</taxon>
        <taxon>rosids</taxon>
        <taxon>malvids</taxon>
        <taxon>Brassicales</taxon>
        <taxon>Brassicaceae</taxon>
        <taxon>Camelineae</taxon>
        <taxon>Arabidopsis</taxon>
    </lineage>
</organism>